<comment type="function">
    <text evidence="1">Represses a number of genes involved in the response to DNA damage (SOS response), including recA and lexA. In the presence of single-stranded DNA, RecA interacts with LexA causing an autocatalytic cleavage which disrupts the DNA-binding part of LexA, leading to derepression of the SOS regulon and eventually DNA repair.</text>
</comment>
<comment type="catalytic activity">
    <reaction evidence="1">
        <text>Hydrolysis of Ala-|-Gly bond in repressor LexA.</text>
        <dbReference type="EC" id="3.4.21.88"/>
    </reaction>
</comment>
<comment type="subunit">
    <text evidence="1">Homodimer.</text>
</comment>
<comment type="similarity">
    <text evidence="1">Belongs to the peptidase S24 family.</text>
</comment>
<organism>
    <name type="scientific">Limosilactobacillus reuteri (strain DSM 20016)</name>
    <name type="common">Lactobacillus reuteri</name>
    <dbReference type="NCBI Taxonomy" id="557436"/>
    <lineage>
        <taxon>Bacteria</taxon>
        <taxon>Bacillati</taxon>
        <taxon>Bacillota</taxon>
        <taxon>Bacilli</taxon>
        <taxon>Lactobacillales</taxon>
        <taxon>Lactobacillaceae</taxon>
        <taxon>Limosilactobacillus</taxon>
    </lineage>
</organism>
<gene>
    <name evidence="1" type="primary">lexA</name>
    <name type="ordered locus">Lreu_0677</name>
</gene>
<evidence type="ECO:0000255" key="1">
    <source>
        <dbReference type="HAMAP-Rule" id="MF_00015"/>
    </source>
</evidence>
<protein>
    <recommendedName>
        <fullName evidence="1">LexA repressor</fullName>
        <ecNumber evidence="1">3.4.21.88</ecNumber>
    </recommendedName>
</protein>
<accession>A5VJB8</accession>
<name>LEXA_LIMRD</name>
<keyword id="KW-0068">Autocatalytic cleavage</keyword>
<keyword id="KW-0227">DNA damage</keyword>
<keyword id="KW-0234">DNA repair</keyword>
<keyword id="KW-0235">DNA replication</keyword>
<keyword id="KW-0238">DNA-binding</keyword>
<keyword id="KW-0378">Hydrolase</keyword>
<keyword id="KW-1185">Reference proteome</keyword>
<keyword id="KW-0678">Repressor</keyword>
<keyword id="KW-0742">SOS response</keyword>
<keyword id="KW-0804">Transcription</keyword>
<keyword id="KW-0805">Transcription regulation</keyword>
<dbReference type="EC" id="3.4.21.88" evidence="1"/>
<dbReference type="EMBL" id="CP000705">
    <property type="protein sequence ID" value="ABQ82942.1"/>
    <property type="molecule type" value="Genomic_DNA"/>
</dbReference>
<dbReference type="RefSeq" id="WP_003668202.1">
    <property type="nucleotide sequence ID" value="NC_009513.1"/>
</dbReference>
<dbReference type="SMR" id="A5VJB8"/>
<dbReference type="STRING" id="557436.Lreu_0677"/>
<dbReference type="MEROPS" id="S24.001"/>
<dbReference type="KEGG" id="lre:Lreu_0677"/>
<dbReference type="PATRIC" id="fig|557436.17.peg.750"/>
<dbReference type="eggNOG" id="COG1974">
    <property type="taxonomic scope" value="Bacteria"/>
</dbReference>
<dbReference type="HOGENOM" id="CLU_066192_45_1_9"/>
<dbReference type="Proteomes" id="UP000001991">
    <property type="component" value="Chromosome"/>
</dbReference>
<dbReference type="GO" id="GO:0003677">
    <property type="term" value="F:DNA binding"/>
    <property type="evidence" value="ECO:0007669"/>
    <property type="project" value="UniProtKB-UniRule"/>
</dbReference>
<dbReference type="GO" id="GO:0004252">
    <property type="term" value="F:serine-type endopeptidase activity"/>
    <property type="evidence" value="ECO:0007669"/>
    <property type="project" value="UniProtKB-UniRule"/>
</dbReference>
<dbReference type="GO" id="GO:0006281">
    <property type="term" value="P:DNA repair"/>
    <property type="evidence" value="ECO:0007669"/>
    <property type="project" value="UniProtKB-UniRule"/>
</dbReference>
<dbReference type="GO" id="GO:0006260">
    <property type="term" value="P:DNA replication"/>
    <property type="evidence" value="ECO:0007669"/>
    <property type="project" value="UniProtKB-UniRule"/>
</dbReference>
<dbReference type="GO" id="GO:0045892">
    <property type="term" value="P:negative regulation of DNA-templated transcription"/>
    <property type="evidence" value="ECO:0007669"/>
    <property type="project" value="UniProtKB-UniRule"/>
</dbReference>
<dbReference type="GO" id="GO:0006508">
    <property type="term" value="P:proteolysis"/>
    <property type="evidence" value="ECO:0007669"/>
    <property type="project" value="InterPro"/>
</dbReference>
<dbReference type="GO" id="GO:0009432">
    <property type="term" value="P:SOS response"/>
    <property type="evidence" value="ECO:0007669"/>
    <property type="project" value="UniProtKB-UniRule"/>
</dbReference>
<dbReference type="CDD" id="cd06529">
    <property type="entry name" value="S24_LexA-like"/>
    <property type="match status" value="1"/>
</dbReference>
<dbReference type="FunFam" id="2.10.109.10:FF:000001">
    <property type="entry name" value="LexA repressor"/>
    <property type="match status" value="1"/>
</dbReference>
<dbReference type="Gene3D" id="2.10.109.10">
    <property type="entry name" value="Umud Fragment, subunit A"/>
    <property type="match status" value="1"/>
</dbReference>
<dbReference type="Gene3D" id="1.10.10.10">
    <property type="entry name" value="Winged helix-like DNA-binding domain superfamily/Winged helix DNA-binding domain"/>
    <property type="match status" value="1"/>
</dbReference>
<dbReference type="HAMAP" id="MF_00015">
    <property type="entry name" value="LexA"/>
    <property type="match status" value="1"/>
</dbReference>
<dbReference type="InterPro" id="IPR006200">
    <property type="entry name" value="LexA"/>
</dbReference>
<dbReference type="InterPro" id="IPR039418">
    <property type="entry name" value="LexA-like"/>
</dbReference>
<dbReference type="InterPro" id="IPR036286">
    <property type="entry name" value="LexA/Signal_pep-like_sf"/>
</dbReference>
<dbReference type="InterPro" id="IPR006199">
    <property type="entry name" value="LexA_DNA-bd_dom"/>
</dbReference>
<dbReference type="InterPro" id="IPR050077">
    <property type="entry name" value="LexA_repressor"/>
</dbReference>
<dbReference type="InterPro" id="IPR006197">
    <property type="entry name" value="Peptidase_S24_LexA"/>
</dbReference>
<dbReference type="InterPro" id="IPR015927">
    <property type="entry name" value="Peptidase_S24_S26A/B/C"/>
</dbReference>
<dbReference type="InterPro" id="IPR036388">
    <property type="entry name" value="WH-like_DNA-bd_sf"/>
</dbReference>
<dbReference type="InterPro" id="IPR036390">
    <property type="entry name" value="WH_DNA-bd_sf"/>
</dbReference>
<dbReference type="NCBIfam" id="TIGR00498">
    <property type="entry name" value="lexA"/>
    <property type="match status" value="1"/>
</dbReference>
<dbReference type="PANTHER" id="PTHR33516">
    <property type="entry name" value="LEXA REPRESSOR"/>
    <property type="match status" value="1"/>
</dbReference>
<dbReference type="PANTHER" id="PTHR33516:SF2">
    <property type="entry name" value="LEXA REPRESSOR-RELATED"/>
    <property type="match status" value="1"/>
</dbReference>
<dbReference type="Pfam" id="PF01726">
    <property type="entry name" value="LexA_DNA_bind"/>
    <property type="match status" value="1"/>
</dbReference>
<dbReference type="Pfam" id="PF00717">
    <property type="entry name" value="Peptidase_S24"/>
    <property type="match status" value="1"/>
</dbReference>
<dbReference type="PRINTS" id="PR00726">
    <property type="entry name" value="LEXASERPTASE"/>
</dbReference>
<dbReference type="SUPFAM" id="SSF51306">
    <property type="entry name" value="LexA/Signal peptidase"/>
    <property type="match status" value="1"/>
</dbReference>
<dbReference type="SUPFAM" id="SSF46785">
    <property type="entry name" value="Winged helix' DNA-binding domain"/>
    <property type="match status" value="1"/>
</dbReference>
<sequence>MAKLAKNKQMAVLNYIHKQVEDHGYPPTVREICSAVGLSSTSTVHGHISRLIEQGFLQKDPSKPRALEITPKGLDILGVKPIQKEIPMLGVVTAGQPILAVENATEFFPIPPSIQDNNDLFMLTIRGTSMIKAGIFNGDQVIVRKQSTAKNGDIVIAMNDDNEATCKRFYKEKTRFRLQPENDTMEPIFLDNVKILGKVVGLFRDHIF</sequence>
<proteinExistence type="inferred from homology"/>
<feature type="chain" id="PRO_1000057131" description="LexA repressor">
    <location>
        <begin position="1"/>
        <end position="208"/>
    </location>
</feature>
<feature type="DNA-binding region" description="H-T-H motif" evidence="1">
    <location>
        <begin position="29"/>
        <end position="49"/>
    </location>
</feature>
<feature type="active site" description="For autocatalytic cleavage activity" evidence="1">
    <location>
        <position position="129"/>
    </location>
</feature>
<feature type="active site" description="For autocatalytic cleavage activity" evidence="1">
    <location>
        <position position="167"/>
    </location>
</feature>
<feature type="site" description="Cleavage; by autolysis" evidence="1">
    <location>
        <begin position="94"/>
        <end position="95"/>
    </location>
</feature>
<reference key="1">
    <citation type="journal article" date="2011" name="PLoS Genet.">
        <title>The evolution of host specialization in the vertebrate gut symbiont Lactobacillus reuteri.</title>
        <authorList>
            <person name="Frese S.A."/>
            <person name="Benson A.K."/>
            <person name="Tannock G.W."/>
            <person name="Loach D.M."/>
            <person name="Kim J."/>
            <person name="Zhang M."/>
            <person name="Oh P.L."/>
            <person name="Heng N.C."/>
            <person name="Patil P.B."/>
            <person name="Juge N."/>
            <person name="Mackenzie D.A."/>
            <person name="Pearson B.M."/>
            <person name="Lapidus A."/>
            <person name="Dalin E."/>
            <person name="Tice H."/>
            <person name="Goltsman E."/>
            <person name="Land M."/>
            <person name="Hauser L."/>
            <person name="Ivanova N."/>
            <person name="Kyrpides N.C."/>
            <person name="Walter J."/>
        </authorList>
    </citation>
    <scope>NUCLEOTIDE SEQUENCE [LARGE SCALE GENOMIC DNA]</scope>
    <source>
        <strain>DSM 20016</strain>
    </source>
</reference>